<proteinExistence type="inferred from homology"/>
<feature type="chain" id="PRO_0000187627" description="Uroporphyrinogen decarboxylase">
    <location>
        <begin position="1"/>
        <end position="354"/>
    </location>
</feature>
<feature type="binding site" evidence="1">
    <location>
        <begin position="27"/>
        <end position="31"/>
    </location>
    <ligand>
        <name>substrate</name>
    </ligand>
</feature>
<feature type="binding site" evidence="1">
    <location>
        <position position="46"/>
    </location>
    <ligand>
        <name>substrate</name>
    </ligand>
</feature>
<feature type="binding site" evidence="1">
    <location>
        <position position="77"/>
    </location>
    <ligand>
        <name>substrate</name>
    </ligand>
</feature>
<feature type="binding site" evidence="1">
    <location>
        <position position="154"/>
    </location>
    <ligand>
        <name>substrate</name>
    </ligand>
</feature>
<feature type="binding site" evidence="1">
    <location>
        <position position="209"/>
    </location>
    <ligand>
        <name>substrate</name>
    </ligand>
</feature>
<feature type="binding site" evidence="1">
    <location>
        <position position="327"/>
    </location>
    <ligand>
        <name>substrate</name>
    </ligand>
</feature>
<feature type="site" description="Transition state stabilizer" evidence="1">
    <location>
        <position position="77"/>
    </location>
</feature>
<dbReference type="EC" id="4.1.1.37" evidence="1"/>
<dbReference type="EMBL" id="AE015451">
    <property type="protein sequence ID" value="AAN70639.1"/>
    <property type="molecule type" value="Genomic_DNA"/>
</dbReference>
<dbReference type="RefSeq" id="NP_747175.1">
    <property type="nucleotide sequence ID" value="NC_002947.4"/>
</dbReference>
<dbReference type="RefSeq" id="WP_010955621.1">
    <property type="nucleotide sequence ID" value="NZ_CP169744.1"/>
</dbReference>
<dbReference type="SMR" id="Q88CV6"/>
<dbReference type="STRING" id="160488.PP_5074"/>
<dbReference type="PaxDb" id="160488-PP_5074"/>
<dbReference type="GeneID" id="83682808"/>
<dbReference type="KEGG" id="ppu:PP_5074"/>
<dbReference type="PATRIC" id="fig|160488.4.peg.5416"/>
<dbReference type="eggNOG" id="COG0407">
    <property type="taxonomic scope" value="Bacteria"/>
</dbReference>
<dbReference type="HOGENOM" id="CLU_040933_0_0_6"/>
<dbReference type="OrthoDB" id="9806656at2"/>
<dbReference type="PhylomeDB" id="Q88CV6"/>
<dbReference type="BioCyc" id="PPUT160488:G1G01-5418-MONOMER"/>
<dbReference type="UniPathway" id="UPA00251">
    <property type="reaction ID" value="UER00321"/>
</dbReference>
<dbReference type="Proteomes" id="UP000000556">
    <property type="component" value="Chromosome"/>
</dbReference>
<dbReference type="GO" id="GO:0005829">
    <property type="term" value="C:cytosol"/>
    <property type="evidence" value="ECO:0007669"/>
    <property type="project" value="TreeGrafter"/>
</dbReference>
<dbReference type="GO" id="GO:0004853">
    <property type="term" value="F:uroporphyrinogen decarboxylase activity"/>
    <property type="evidence" value="ECO:0007669"/>
    <property type="project" value="UniProtKB-UniRule"/>
</dbReference>
<dbReference type="GO" id="GO:0019353">
    <property type="term" value="P:protoporphyrinogen IX biosynthetic process from glutamate"/>
    <property type="evidence" value="ECO:0007669"/>
    <property type="project" value="TreeGrafter"/>
</dbReference>
<dbReference type="CDD" id="cd00717">
    <property type="entry name" value="URO-D"/>
    <property type="match status" value="1"/>
</dbReference>
<dbReference type="FunFam" id="3.20.20.210:FF:000001">
    <property type="entry name" value="Uroporphyrinogen decarboxylase"/>
    <property type="match status" value="1"/>
</dbReference>
<dbReference type="Gene3D" id="3.20.20.210">
    <property type="match status" value="1"/>
</dbReference>
<dbReference type="HAMAP" id="MF_00218">
    <property type="entry name" value="URO_D"/>
    <property type="match status" value="1"/>
</dbReference>
<dbReference type="InterPro" id="IPR038071">
    <property type="entry name" value="UROD/MetE-like_sf"/>
</dbReference>
<dbReference type="InterPro" id="IPR006361">
    <property type="entry name" value="Uroporphyrinogen_deCO2ase_HemE"/>
</dbReference>
<dbReference type="InterPro" id="IPR000257">
    <property type="entry name" value="Uroporphyrinogen_deCOase"/>
</dbReference>
<dbReference type="NCBIfam" id="TIGR01464">
    <property type="entry name" value="hemE"/>
    <property type="match status" value="1"/>
</dbReference>
<dbReference type="PANTHER" id="PTHR21091">
    <property type="entry name" value="METHYLTETRAHYDROFOLATE:HOMOCYSTEINE METHYLTRANSFERASE RELATED"/>
    <property type="match status" value="1"/>
</dbReference>
<dbReference type="PANTHER" id="PTHR21091:SF169">
    <property type="entry name" value="UROPORPHYRINOGEN DECARBOXYLASE"/>
    <property type="match status" value="1"/>
</dbReference>
<dbReference type="Pfam" id="PF01208">
    <property type="entry name" value="URO-D"/>
    <property type="match status" value="1"/>
</dbReference>
<dbReference type="SUPFAM" id="SSF51726">
    <property type="entry name" value="UROD/MetE-like"/>
    <property type="match status" value="1"/>
</dbReference>
<dbReference type="PROSITE" id="PS00906">
    <property type="entry name" value="UROD_1"/>
    <property type="match status" value="1"/>
</dbReference>
<dbReference type="PROSITE" id="PS00907">
    <property type="entry name" value="UROD_2"/>
    <property type="match status" value="1"/>
</dbReference>
<sequence length="354" mass="38884">MTALKNDRFLRALLKQPVDVTPVWMMRQAGRYLPEYRASRAKAGDFMSLCMNPQFACEVTLQPLDRYPLDAAILFSDILTIPDAMGLGLYFETGEGPRFKKVISTPADIEALPVPDPQKDLGYVMDAVSTIRRELNGRVPLIGFSGSPWTLATYMVEGGSSKDFRKTKAMAYDNPQALHLLLDKLAQSVTSYLNGQILAGAQAVQIFDTWGGNLSAAAYQEFSLAYMRKIVSGLIREHEGRKVPVILFTKNGGLWLESIAEAGADALGLDWTCEIGDARRRVGDKVALQGNMDPTVLYAKPEAIRKEVARILASYGHGTGHVFNLGHGITPEVDPEHAGAFINAVHELSAQYHQ</sequence>
<comment type="function">
    <text evidence="1">Catalyzes the decarboxylation of four acetate groups of uroporphyrinogen-III to yield coproporphyrinogen-III.</text>
</comment>
<comment type="catalytic activity">
    <reaction evidence="1">
        <text>uroporphyrinogen III + 4 H(+) = coproporphyrinogen III + 4 CO2</text>
        <dbReference type="Rhea" id="RHEA:19865"/>
        <dbReference type="ChEBI" id="CHEBI:15378"/>
        <dbReference type="ChEBI" id="CHEBI:16526"/>
        <dbReference type="ChEBI" id="CHEBI:57308"/>
        <dbReference type="ChEBI" id="CHEBI:57309"/>
        <dbReference type="EC" id="4.1.1.37"/>
    </reaction>
</comment>
<comment type="pathway">
    <text evidence="1">Porphyrin-containing compound metabolism; protoporphyrin-IX biosynthesis; coproporphyrinogen-III from 5-aminolevulinate: step 4/4.</text>
</comment>
<comment type="subunit">
    <text evidence="1">Homodimer.</text>
</comment>
<comment type="subcellular location">
    <subcellularLocation>
        <location evidence="1">Cytoplasm</location>
    </subcellularLocation>
</comment>
<comment type="similarity">
    <text evidence="1">Belongs to the uroporphyrinogen decarboxylase family.</text>
</comment>
<organism>
    <name type="scientific">Pseudomonas putida (strain ATCC 47054 / DSM 6125 / CFBP 8728 / NCIMB 11950 / KT2440)</name>
    <dbReference type="NCBI Taxonomy" id="160488"/>
    <lineage>
        <taxon>Bacteria</taxon>
        <taxon>Pseudomonadati</taxon>
        <taxon>Pseudomonadota</taxon>
        <taxon>Gammaproteobacteria</taxon>
        <taxon>Pseudomonadales</taxon>
        <taxon>Pseudomonadaceae</taxon>
        <taxon>Pseudomonas</taxon>
    </lineage>
</organism>
<reference key="1">
    <citation type="journal article" date="2002" name="Environ. Microbiol.">
        <title>Complete genome sequence and comparative analysis of the metabolically versatile Pseudomonas putida KT2440.</title>
        <authorList>
            <person name="Nelson K.E."/>
            <person name="Weinel C."/>
            <person name="Paulsen I.T."/>
            <person name="Dodson R.J."/>
            <person name="Hilbert H."/>
            <person name="Martins dos Santos V.A.P."/>
            <person name="Fouts D.E."/>
            <person name="Gill S.R."/>
            <person name="Pop M."/>
            <person name="Holmes M."/>
            <person name="Brinkac L.M."/>
            <person name="Beanan M.J."/>
            <person name="DeBoy R.T."/>
            <person name="Daugherty S.C."/>
            <person name="Kolonay J.F."/>
            <person name="Madupu R."/>
            <person name="Nelson W.C."/>
            <person name="White O."/>
            <person name="Peterson J.D."/>
            <person name="Khouri H.M."/>
            <person name="Hance I."/>
            <person name="Chris Lee P."/>
            <person name="Holtzapple E.K."/>
            <person name="Scanlan D."/>
            <person name="Tran K."/>
            <person name="Moazzez A."/>
            <person name="Utterback T.R."/>
            <person name="Rizzo M."/>
            <person name="Lee K."/>
            <person name="Kosack D."/>
            <person name="Moestl D."/>
            <person name="Wedler H."/>
            <person name="Lauber J."/>
            <person name="Stjepandic D."/>
            <person name="Hoheisel J."/>
            <person name="Straetz M."/>
            <person name="Heim S."/>
            <person name="Kiewitz C."/>
            <person name="Eisen J.A."/>
            <person name="Timmis K.N."/>
            <person name="Duesterhoeft A."/>
            <person name="Tuemmler B."/>
            <person name="Fraser C.M."/>
        </authorList>
    </citation>
    <scope>NUCLEOTIDE SEQUENCE [LARGE SCALE GENOMIC DNA]</scope>
    <source>
        <strain>ATCC 47054 / DSM 6125 / CFBP 8728 / NCIMB 11950 / KT2440</strain>
    </source>
</reference>
<keyword id="KW-0963">Cytoplasm</keyword>
<keyword id="KW-0210">Decarboxylase</keyword>
<keyword id="KW-0456">Lyase</keyword>
<keyword id="KW-0627">Porphyrin biosynthesis</keyword>
<keyword id="KW-1185">Reference proteome</keyword>
<accession>Q88CV6</accession>
<protein>
    <recommendedName>
        <fullName evidence="1">Uroporphyrinogen decarboxylase</fullName>
        <shortName evidence="1">UPD</shortName>
        <shortName evidence="1">URO-D</shortName>
        <ecNumber evidence="1">4.1.1.37</ecNumber>
    </recommendedName>
</protein>
<name>DCUP_PSEPK</name>
<evidence type="ECO:0000255" key="1">
    <source>
        <dbReference type="HAMAP-Rule" id="MF_00218"/>
    </source>
</evidence>
<gene>
    <name evidence="1" type="primary">hemE</name>
    <name type="ordered locus">PP_5074</name>
</gene>